<feature type="signal peptide" evidence="1">
    <location>
        <begin position="1"/>
        <end position="22"/>
    </location>
</feature>
<feature type="propeptide" id="PRO_0000436208" evidence="4">
    <location>
        <begin position="23"/>
        <end position="39"/>
    </location>
</feature>
<feature type="peptide" id="PRO_0000436209" description="Ocellatin-PT1" evidence="2">
    <location>
        <begin position="42"/>
        <end position="66"/>
    </location>
</feature>
<feature type="modified residue" description="Valine amide" evidence="2">
    <location>
        <position position="66"/>
    </location>
</feature>
<name>OCE1_LEPPU</name>
<dbReference type="TCDB" id="1.C.52.1.35">
    <property type="family name" value="the dermaseptin (dermaseptin) family"/>
</dbReference>
<dbReference type="GO" id="GO:0005576">
    <property type="term" value="C:extracellular region"/>
    <property type="evidence" value="ECO:0007669"/>
    <property type="project" value="UniProtKB-SubCell"/>
</dbReference>
<dbReference type="GO" id="GO:0042742">
    <property type="term" value="P:defense response to bacterium"/>
    <property type="evidence" value="ECO:0007669"/>
    <property type="project" value="UniProtKB-KW"/>
</dbReference>
<dbReference type="InterPro" id="IPR004275">
    <property type="entry name" value="Frog_antimicrobial_propeptide"/>
</dbReference>
<dbReference type="InterPro" id="IPR016322">
    <property type="entry name" value="FSAP"/>
</dbReference>
<dbReference type="Pfam" id="PF03032">
    <property type="entry name" value="FSAP_sig_propep"/>
    <property type="match status" value="1"/>
</dbReference>
<dbReference type="PIRSF" id="PIRSF001822">
    <property type="entry name" value="Dermaseptin_precursor"/>
    <property type="match status" value="1"/>
</dbReference>
<organism>
    <name type="scientific">Leptodactylus pustulatus</name>
    <name type="common">Ceara white-lipped frog</name>
    <dbReference type="NCBI Taxonomy" id="1349691"/>
    <lineage>
        <taxon>Eukaryota</taxon>
        <taxon>Metazoa</taxon>
        <taxon>Chordata</taxon>
        <taxon>Craniata</taxon>
        <taxon>Vertebrata</taxon>
        <taxon>Euteleostomi</taxon>
        <taxon>Amphibia</taxon>
        <taxon>Batrachia</taxon>
        <taxon>Anura</taxon>
        <taxon>Neobatrachia</taxon>
        <taxon>Hyloidea</taxon>
        <taxon>Leptodactylidae</taxon>
        <taxon>Leptodactylinae</taxon>
        <taxon>Leptodactylus</taxon>
    </lineage>
</organism>
<sequence length="66" mass="7442">MAFLKKSLFLVLFLGLVSLSICDEEKRQDEDDDDDDDEEKRGVFDIIKDAGKQLVAHAMGKIAEKV</sequence>
<comment type="function">
    <text evidence="2">Has antibacterial activity against Gram-negative bacterium E.coli ATCC 25922 (MIC=300 uM) but not against S.pneumoniae ATCC 700603, S.choleraesuis ATCC 14028 or Gram-positive bacterium S.aureus ATCC 29313. Shows virtually no hemolytic activity and no cytotoxicity.</text>
</comment>
<comment type="subcellular location">
    <subcellularLocation>
        <location evidence="2">Secreted</location>
    </subcellularLocation>
</comment>
<comment type="tissue specificity">
    <text evidence="5">Expressed by the skin glands.</text>
</comment>
<comment type="mass spectrometry" mass="2638.24" method="MALDI" evidence="2"/>
<comment type="similarity">
    <text evidence="4">Belongs to the frog skin active peptide (FSAP) family. Ocellatin subfamily.</text>
</comment>
<accession>C0HJZ6</accession>
<protein>
    <recommendedName>
        <fullName evidence="3">Ocellatin-PT1</fullName>
    </recommendedName>
</protein>
<proteinExistence type="evidence at protein level"/>
<reference evidence="4" key="1">
    <citation type="journal article" date="2015" name="J. Nat. Prod.">
        <title>Characterization and biological activities of ocellatin peptides from the skin secretion of the frog Leptodactylus pustulatus.</title>
        <authorList>
            <person name="Marani M.M."/>
            <person name="Dourado F.S."/>
            <person name="Quelemes P.V."/>
            <person name="de Araujo A.R."/>
            <person name="Perfeito M.L."/>
            <person name="Barbosa E.A."/>
            <person name="Veras L.M."/>
            <person name="Coelho A.L."/>
            <person name="Andrade E.B."/>
            <person name="Eaton P."/>
            <person name="Longo J.P."/>
            <person name="Azevedo R.B."/>
            <person name="Delerue-Matos C."/>
            <person name="Leite J.R."/>
        </authorList>
    </citation>
    <scope>NUCLEOTIDE SEQUENCE [MRNA]</scope>
    <scope>PROTEIN SEQUENCE OF 42-66</scope>
    <scope>FUNCTION</scope>
    <scope>SUBCELLULAR LOCATION</scope>
    <scope>MASS SPECTROMETRY</scope>
    <scope>AMIDATION AT VAL-66</scope>
    <scope>IDENTIFICATION BY MASS SPECTROMETRY</scope>
    <source>
        <tissue evidence="3">Skin secretion</tissue>
    </source>
</reference>
<keyword id="KW-0027">Amidation</keyword>
<keyword id="KW-0878">Amphibian defense peptide</keyword>
<keyword id="KW-0044">Antibiotic</keyword>
<keyword id="KW-0929">Antimicrobial</keyword>
<keyword id="KW-0165">Cleavage on pair of basic residues</keyword>
<keyword id="KW-0903">Direct protein sequencing</keyword>
<keyword id="KW-0964">Secreted</keyword>
<keyword id="KW-0732">Signal</keyword>
<evidence type="ECO:0000255" key="1"/>
<evidence type="ECO:0000269" key="2">
    <source>
    </source>
</evidence>
<evidence type="ECO:0000303" key="3">
    <source>
    </source>
</evidence>
<evidence type="ECO:0000305" key="4"/>
<evidence type="ECO:0000305" key="5">
    <source>
    </source>
</evidence>